<feature type="signal peptide" evidence="2">
    <location>
        <begin position="1"/>
        <end position="24"/>
    </location>
</feature>
<feature type="chain" id="PRO_0000032050" description="Glutelin type-A 3 acidic chain">
    <location>
        <begin position="25"/>
        <end position="305"/>
    </location>
</feature>
<feature type="chain" id="PRO_0000032051" description="Glutelin type-A 3 basic chain">
    <location>
        <begin position="306"/>
        <end position="496"/>
    </location>
</feature>
<feature type="domain" description="Cupin type-1 1" evidence="2">
    <location>
        <begin position="50"/>
        <end position="248"/>
    </location>
</feature>
<feature type="domain" description="Cupin type-1 2" evidence="2">
    <location>
        <begin position="318"/>
        <end position="467"/>
    </location>
</feature>
<feature type="disulfide bond" evidence="1">
    <location>
        <begin position="45"/>
        <end position="78"/>
    </location>
</feature>
<feature type="disulfide bond" description="Interchain (between acidic and basic chains)" evidence="2">
    <location>
        <begin position="121"/>
        <end position="312"/>
    </location>
</feature>
<feature type="sequence conflict" description="In Ref. 2; CAA38211." evidence="3" ref="2">
    <original>S</original>
    <variation>F</variation>
    <location>
        <position position="11"/>
    </location>
</feature>
<feature type="sequence conflict" description="In Ref. 1; AAA50314/AAA50316." evidence="3" ref="1">
    <original>L</original>
    <variation>F</variation>
    <location>
        <position position="15"/>
    </location>
</feature>
<feature type="sequence conflict" description="In Ref. 6; AK107271." evidence="3" ref="6">
    <original>N</original>
    <variation>D</variation>
    <location>
        <position position="100"/>
    </location>
</feature>
<feature type="sequence conflict" description="In Ref. 1; AAA50314." evidence="3" ref="1">
    <original>D</original>
    <variation>A</variation>
    <location>
        <position position="135"/>
    </location>
</feature>
<feature type="sequence conflict" description="In Ref. 1; AAA50314." evidence="3" ref="1">
    <original>V</original>
    <variation>L</variation>
    <location>
        <position position="169"/>
    </location>
</feature>
<feature type="sequence conflict" description="In Ref. 1; AAA50314/AAA50316." evidence="3" ref="1">
    <original>DAPI</original>
    <variation>YMKV</variation>
    <location>
        <begin position="178"/>
        <end position="181"/>
    </location>
</feature>
<feature type="sequence conflict" description="In Ref. 1; AAA50316." evidence="3" ref="1">
    <original>N</original>
    <variation>H</variation>
    <location>
        <position position="194"/>
    </location>
</feature>
<feature type="sequence conflict" description="In Ref. 1; AAA50316." evidence="3" ref="1">
    <original>G</original>
    <variation>S</variation>
    <location>
        <position position="212"/>
    </location>
</feature>
<feature type="sequence conflict" description="In Ref. 1; AAA50316." evidence="3" ref="1">
    <original>V</original>
    <variation>VV</variation>
    <location>
        <position position="263"/>
    </location>
</feature>
<feature type="sequence conflict" description="In Ref. 1; AAA50316." evidence="3" ref="1">
    <original>S</original>
    <variation>P</variation>
    <location>
        <position position="268"/>
    </location>
</feature>
<feature type="sequence conflict" description="In Ref. 1; AAA50316." evidence="3" ref="1">
    <original>Q</original>
    <variation>H</variation>
    <location>
        <position position="271"/>
    </location>
</feature>
<feature type="sequence conflict" description="In Ref. 1; AAA50314." evidence="3" ref="1">
    <original>NLAD</original>
    <variation>KRVE</variation>
    <location>
        <begin position="324"/>
        <end position="327"/>
    </location>
</feature>
<accession>Q09151</accession>
<accession>Q38G57</accession>
<accession>Q40688</accession>
<accession>Q75I63</accession>
<comment type="function">
    <text>Seed storage protein.</text>
</comment>
<comment type="subunit">
    <text>Hexamer; each subunit is composed of an acidic and a basic chain derived from a single precursor and linked by a disulfide bond.</text>
</comment>
<comment type="developmental stage">
    <text>Levels increase early during seed development, reach maximum 10 days after flowering and then decrease.</text>
</comment>
<comment type="similarity">
    <text evidence="3">Belongs to the 11S seed storage protein (globulins) family.</text>
</comment>
<organism>
    <name type="scientific">Oryza sativa subsp. japonica</name>
    <name type="common">Rice</name>
    <dbReference type="NCBI Taxonomy" id="39947"/>
    <lineage>
        <taxon>Eukaryota</taxon>
        <taxon>Viridiplantae</taxon>
        <taxon>Streptophyta</taxon>
        <taxon>Embryophyta</taxon>
        <taxon>Tracheophyta</taxon>
        <taxon>Spermatophyta</taxon>
        <taxon>Magnoliopsida</taxon>
        <taxon>Liliopsida</taxon>
        <taxon>Poales</taxon>
        <taxon>Poaceae</taxon>
        <taxon>BOP clade</taxon>
        <taxon>Oryzoideae</taxon>
        <taxon>Oryzeae</taxon>
        <taxon>Oryzinae</taxon>
        <taxon>Oryza</taxon>
        <taxon>Oryza sativa</taxon>
    </lineage>
</organism>
<protein>
    <recommendedName>
        <fullName>Glutelin type-A 3</fullName>
    </recommendedName>
    <component>
        <recommendedName>
            <fullName>Glutelin type-A 3 acidic chain</fullName>
        </recommendedName>
    </component>
    <component>
        <recommendedName>
            <fullName>Glutelin type-A 3 basic chain</fullName>
        </recommendedName>
    </component>
</protein>
<proteinExistence type="evidence at transcript level"/>
<dbReference type="EMBL" id="M28158">
    <property type="protein sequence ID" value="AAA50314.2"/>
    <property type="molecule type" value="Genomic_DNA"/>
</dbReference>
<dbReference type="EMBL" id="M28159">
    <property type="protein sequence ID" value="AAA50316.1"/>
    <property type="molecule type" value="mRNA"/>
</dbReference>
<dbReference type="EMBL" id="X54313">
    <property type="protein sequence ID" value="CAA38211.1"/>
    <property type="molecule type" value="Genomic_DNA"/>
</dbReference>
<dbReference type="EMBL" id="AC133398">
    <property type="protein sequence ID" value="AAR01757.1"/>
    <property type="molecule type" value="Genomic_DNA"/>
</dbReference>
<dbReference type="EMBL" id="AP014959">
    <property type="protein sequence ID" value="BAS84792.1"/>
    <property type="molecule type" value="Genomic_DNA"/>
</dbReference>
<dbReference type="EMBL" id="AK107271">
    <property type="status" value="NOT_ANNOTATED_CDS"/>
    <property type="molecule type" value="mRNA"/>
</dbReference>
<dbReference type="PIR" id="C34332">
    <property type="entry name" value="C34332"/>
</dbReference>
<dbReference type="PIR" id="D34332">
    <property type="entry name" value="D34332"/>
</dbReference>
<dbReference type="PIR" id="S18745">
    <property type="entry name" value="S18745"/>
</dbReference>
<dbReference type="RefSeq" id="XP_015632411.1">
    <property type="nucleotide sequence ID" value="XM_015776925.1"/>
</dbReference>
<dbReference type="SMR" id="Q09151"/>
<dbReference type="FunCoup" id="Q09151">
    <property type="interactions" value="1784"/>
</dbReference>
<dbReference type="STRING" id="39947.Q09151"/>
<dbReference type="PaxDb" id="39947-Q09151"/>
<dbReference type="EnsemblPlants" id="Os03t0427300-01">
    <property type="protein sequence ID" value="Os03t0427300-01"/>
    <property type="gene ID" value="Os03g0427300"/>
</dbReference>
<dbReference type="Gramene" id="Os03t0427300-01">
    <property type="protein sequence ID" value="Os03t0427300-01"/>
    <property type="gene ID" value="Os03g0427300"/>
</dbReference>
<dbReference type="eggNOG" id="ENOG502QU1J">
    <property type="taxonomic scope" value="Eukaryota"/>
</dbReference>
<dbReference type="HOGENOM" id="CLU_026341_2_0_1"/>
<dbReference type="InParanoid" id="Q09151"/>
<dbReference type="OMA" id="ETICAMR"/>
<dbReference type="OrthoDB" id="2016041at2759"/>
<dbReference type="Proteomes" id="UP000000763">
    <property type="component" value="Chromosome 3"/>
</dbReference>
<dbReference type="Proteomes" id="UP000059680">
    <property type="component" value="Chromosome 3"/>
</dbReference>
<dbReference type="ExpressionAtlas" id="Q09151">
    <property type="expression patterns" value="baseline and differential"/>
</dbReference>
<dbReference type="GO" id="GO:0045735">
    <property type="term" value="F:nutrient reservoir activity"/>
    <property type="evidence" value="ECO:0007669"/>
    <property type="project" value="UniProtKB-KW"/>
</dbReference>
<dbReference type="GO" id="GO:0048316">
    <property type="term" value="P:seed development"/>
    <property type="evidence" value="ECO:0007669"/>
    <property type="project" value="UniProtKB-ARBA"/>
</dbReference>
<dbReference type="CDD" id="cd02243">
    <property type="entry name" value="cupin_11S_legumin_C"/>
    <property type="match status" value="1"/>
</dbReference>
<dbReference type="CDD" id="cd02242">
    <property type="entry name" value="cupin_11S_legumin_N"/>
    <property type="match status" value="1"/>
</dbReference>
<dbReference type="FunFam" id="2.60.120.10:FF:000073">
    <property type="entry name" value="Glycinin G1"/>
    <property type="match status" value="1"/>
</dbReference>
<dbReference type="Gene3D" id="2.60.120.10">
    <property type="entry name" value="Jelly Rolls"/>
    <property type="match status" value="2"/>
</dbReference>
<dbReference type="InterPro" id="IPR022379">
    <property type="entry name" value="11S_seedstore_CS"/>
</dbReference>
<dbReference type="InterPro" id="IPR006044">
    <property type="entry name" value="11S_seedstore_pln"/>
</dbReference>
<dbReference type="InterPro" id="IPR006045">
    <property type="entry name" value="Cupin_1"/>
</dbReference>
<dbReference type="InterPro" id="IPR014710">
    <property type="entry name" value="RmlC-like_jellyroll"/>
</dbReference>
<dbReference type="InterPro" id="IPR011051">
    <property type="entry name" value="RmlC_Cupin_sf"/>
</dbReference>
<dbReference type="InterPro" id="IPR050253">
    <property type="entry name" value="Seed_Storage-Functional"/>
</dbReference>
<dbReference type="PANTHER" id="PTHR31189:SF35">
    <property type="entry name" value="12S SEED STORAGE PROTEIN CRB"/>
    <property type="match status" value="1"/>
</dbReference>
<dbReference type="PANTHER" id="PTHR31189">
    <property type="entry name" value="OS03G0336100 PROTEIN-RELATED"/>
    <property type="match status" value="1"/>
</dbReference>
<dbReference type="Pfam" id="PF00190">
    <property type="entry name" value="Cupin_1"/>
    <property type="match status" value="2"/>
</dbReference>
<dbReference type="PRINTS" id="PR00439">
    <property type="entry name" value="11SGLOBULIN"/>
</dbReference>
<dbReference type="SMART" id="SM00835">
    <property type="entry name" value="Cupin_1"/>
    <property type="match status" value="2"/>
</dbReference>
<dbReference type="SUPFAM" id="SSF51182">
    <property type="entry name" value="RmlC-like cupins"/>
    <property type="match status" value="1"/>
</dbReference>
<dbReference type="PROSITE" id="PS00305">
    <property type="entry name" value="11S_SEED_STORAGE"/>
    <property type="match status" value="1"/>
</dbReference>
<reference key="1">
    <citation type="journal article" date="1989" name="J. Biol. Chem.">
        <title>Structure and expression of the rice glutelin multigene family.</title>
        <authorList>
            <person name="Okita T.W."/>
            <person name="Hwang Y.S."/>
            <person name="Hnilo J."/>
            <person name="Kim W.T."/>
            <person name="Aryan A.P."/>
            <person name="Larson R."/>
            <person name="Krishnan H.B."/>
        </authorList>
    </citation>
    <scope>NUCLEOTIDE SEQUENCE [GENOMIC DNA / MRNA]</scope>
    <source>
        <strain>cv. M201</strain>
        <tissue>Seed</tissue>
    </source>
</reference>
<reference key="2">
    <citation type="journal article" date="1991" name="Jpn. J. Genet.">
        <title>Genomic DNA sequences of two new genes for new storage protein glutelin in rice.</title>
        <authorList>
            <person name="Takaiwa F."/>
            <person name="Oono K."/>
        </authorList>
    </citation>
    <scope>NUCLEOTIDE SEQUENCE [GENOMIC DNA]</scope>
    <source>
        <strain>cv. Mangetsumochi</strain>
        <tissue>Immature seed</tissue>
    </source>
</reference>
<reference key="3">
    <citation type="journal article" date="2005" name="Genome Res.">
        <title>Sequence, annotation, and analysis of synteny between rice chromosome 3 and diverged grass species.</title>
        <authorList>
            <consortium name="The rice chromosome 3 sequencing consortium"/>
            <person name="Buell C.R."/>
            <person name="Yuan Q."/>
            <person name="Ouyang S."/>
            <person name="Liu J."/>
            <person name="Zhu W."/>
            <person name="Wang A."/>
            <person name="Maiti R."/>
            <person name="Haas B."/>
            <person name="Wortman J."/>
            <person name="Pertea M."/>
            <person name="Jones K.M."/>
            <person name="Kim M."/>
            <person name="Overton L."/>
            <person name="Tsitrin T."/>
            <person name="Fadrosh D."/>
            <person name="Bera J."/>
            <person name="Weaver B."/>
            <person name="Jin S."/>
            <person name="Johri S."/>
            <person name="Reardon M."/>
            <person name="Webb K."/>
            <person name="Hill J."/>
            <person name="Moffat K."/>
            <person name="Tallon L."/>
            <person name="Van Aken S."/>
            <person name="Lewis M."/>
            <person name="Utterback T."/>
            <person name="Feldblyum T."/>
            <person name="Zismann V."/>
            <person name="Iobst S."/>
            <person name="Hsiao J."/>
            <person name="de Vazeille A.R."/>
            <person name="Salzberg S.L."/>
            <person name="White O."/>
            <person name="Fraser C.M."/>
            <person name="Yu Y."/>
            <person name="Kim H."/>
            <person name="Rambo T."/>
            <person name="Currie J."/>
            <person name="Collura K."/>
            <person name="Kernodle-Thompson S."/>
            <person name="Wei F."/>
            <person name="Kudrna K."/>
            <person name="Ammiraju J.S.S."/>
            <person name="Luo M."/>
            <person name="Goicoechea J.L."/>
            <person name="Wing R.A."/>
            <person name="Henry D."/>
            <person name="Oates R."/>
            <person name="Palmer M."/>
            <person name="Pries G."/>
            <person name="Saski C."/>
            <person name="Simmons J."/>
            <person name="Soderlund C."/>
            <person name="Nelson W."/>
            <person name="de la Bastide M."/>
            <person name="Spiegel L."/>
            <person name="Nascimento L."/>
            <person name="Huang E."/>
            <person name="Preston R."/>
            <person name="Zutavern T."/>
            <person name="Palmer L."/>
            <person name="O'Shaughnessy A."/>
            <person name="Dike S."/>
            <person name="McCombie W.R."/>
            <person name="Minx P."/>
            <person name="Cordum H."/>
            <person name="Wilson R."/>
            <person name="Jin W."/>
            <person name="Lee H.R."/>
            <person name="Jiang J."/>
            <person name="Jackson S."/>
        </authorList>
    </citation>
    <scope>NUCLEOTIDE SEQUENCE [LARGE SCALE GENOMIC DNA]</scope>
    <source>
        <strain>cv. Nipponbare</strain>
    </source>
</reference>
<reference key="4">
    <citation type="journal article" date="2005" name="Nature">
        <title>The map-based sequence of the rice genome.</title>
        <authorList>
            <consortium name="International rice genome sequencing project (IRGSP)"/>
        </authorList>
    </citation>
    <scope>NUCLEOTIDE SEQUENCE [LARGE SCALE GENOMIC DNA]</scope>
    <source>
        <strain>cv. Nipponbare</strain>
    </source>
</reference>
<reference key="5">
    <citation type="journal article" date="2013" name="Rice">
        <title>Improvement of the Oryza sativa Nipponbare reference genome using next generation sequence and optical map data.</title>
        <authorList>
            <person name="Kawahara Y."/>
            <person name="de la Bastide M."/>
            <person name="Hamilton J.P."/>
            <person name="Kanamori H."/>
            <person name="McCombie W.R."/>
            <person name="Ouyang S."/>
            <person name="Schwartz D.C."/>
            <person name="Tanaka T."/>
            <person name="Wu J."/>
            <person name="Zhou S."/>
            <person name="Childs K.L."/>
            <person name="Davidson R.M."/>
            <person name="Lin H."/>
            <person name="Quesada-Ocampo L."/>
            <person name="Vaillancourt B."/>
            <person name="Sakai H."/>
            <person name="Lee S.S."/>
            <person name="Kim J."/>
            <person name="Numa H."/>
            <person name="Itoh T."/>
            <person name="Buell C.R."/>
            <person name="Matsumoto T."/>
        </authorList>
    </citation>
    <scope>GENOME REANNOTATION</scope>
    <source>
        <strain>cv. Nipponbare</strain>
    </source>
</reference>
<reference key="6">
    <citation type="journal article" date="2003" name="Science">
        <title>Collection, mapping, and annotation of over 28,000 cDNA clones from japonica rice.</title>
        <authorList>
            <consortium name="The rice full-length cDNA consortium"/>
        </authorList>
    </citation>
    <scope>NUCLEOTIDE SEQUENCE [LARGE SCALE MRNA]</scope>
    <source>
        <strain>cv. Nipponbare</strain>
    </source>
</reference>
<evidence type="ECO:0000250" key="1"/>
<evidence type="ECO:0000255" key="2"/>
<evidence type="ECO:0000305" key="3"/>
<name>GLUA3_ORYSJ</name>
<gene>
    <name type="primary">GLUA3</name>
    <name type="synonym">GLUA-3</name>
    <name type="synonym">GT22</name>
    <name type="synonym">GT3</name>
    <name type="ordered locus">Os03g0427300</name>
    <name type="ordered locus">LOC_Os03g31360</name>
    <name type="ORF">OSJNBa0083F15.19</name>
</gene>
<sequence length="496" mass="56015">MATIKFPIVFSVVCLFLLCNGSLAQLLSQSTSQWQSSRRGSPRECRFDRLQAFEPIRTVRSQAGTTEFFDVSNELFQCTGVFVVRRVIEPRGLLLPHYSNGATLVYVIQGRGITGPTFPGCPETYQQQFQQSEQDQQLEGQSQSHKFRDEHQKIHRFQQGDVVALPAGVAHWCYNDGDAPIVAIYVTDIYNSANQLDPRHRDFFLAGNNKIGQQLYRYEARDNSKNVFGGFSVELLSEALGISSGVARQLQCQNDQRGEIVRVEHGLSLLQPYASLQEQQQEQVQSRDYGQTQYQQKQLQGSCSNGLDETFCTMRVRQNIDNPNLADTYNPRAGRITYLNGQKFPILNLVQMSAVKVNLYQNALLSPFWNINAHSVVYITQGRARVQVVNNNGKTVFDGELRRGQLLIIPQHHVVIKKAQREGCSYIALKTNPDSMVSHMAGKNSIFRALPDDVVANAYRISREEARRLKHNRGDELGVFTPSHAYKSYQDISVSA</sequence>
<keyword id="KW-1015">Disulfide bond</keyword>
<keyword id="KW-1185">Reference proteome</keyword>
<keyword id="KW-0708">Seed storage protein</keyword>
<keyword id="KW-0732">Signal</keyword>
<keyword id="KW-0758">Storage protein</keyword>